<proteinExistence type="inferred from homology"/>
<feature type="chain" id="PRO_1000121489" description="Large ribosomal subunit protein bL12">
    <location>
        <begin position="1"/>
        <end position="121"/>
    </location>
</feature>
<organism>
    <name type="scientific">Shewanella piezotolerans (strain WP3 / JCM 13877)</name>
    <dbReference type="NCBI Taxonomy" id="225849"/>
    <lineage>
        <taxon>Bacteria</taxon>
        <taxon>Pseudomonadati</taxon>
        <taxon>Pseudomonadota</taxon>
        <taxon>Gammaproteobacteria</taxon>
        <taxon>Alteromonadales</taxon>
        <taxon>Shewanellaceae</taxon>
        <taxon>Shewanella</taxon>
    </lineage>
</organism>
<sequence>MSITKDQILEALAEMSVMEVVELIEAMEEKFGVSAAAAVVSGGADAGAAEEQTEFDVILTSHGDNKVATIKALRAATGLGLKEAKGMAESAPVAVKEAITKEEAEALKTDLEAAGAAVEIK</sequence>
<dbReference type="EMBL" id="CP000472">
    <property type="protein sequence ID" value="ACJ28758.1"/>
    <property type="molecule type" value="Genomic_DNA"/>
</dbReference>
<dbReference type="RefSeq" id="WP_020912131.1">
    <property type="nucleotide sequence ID" value="NC_011566.1"/>
</dbReference>
<dbReference type="SMR" id="B8CNC4"/>
<dbReference type="STRING" id="225849.swp_2002"/>
<dbReference type="KEGG" id="swp:swp_2002"/>
<dbReference type="eggNOG" id="COG0222">
    <property type="taxonomic scope" value="Bacteria"/>
</dbReference>
<dbReference type="HOGENOM" id="CLU_086499_3_2_6"/>
<dbReference type="OrthoDB" id="9811748at2"/>
<dbReference type="Proteomes" id="UP000000753">
    <property type="component" value="Chromosome"/>
</dbReference>
<dbReference type="GO" id="GO:0022625">
    <property type="term" value="C:cytosolic large ribosomal subunit"/>
    <property type="evidence" value="ECO:0007669"/>
    <property type="project" value="TreeGrafter"/>
</dbReference>
<dbReference type="GO" id="GO:0003729">
    <property type="term" value="F:mRNA binding"/>
    <property type="evidence" value="ECO:0007669"/>
    <property type="project" value="TreeGrafter"/>
</dbReference>
<dbReference type="GO" id="GO:0003735">
    <property type="term" value="F:structural constituent of ribosome"/>
    <property type="evidence" value="ECO:0007669"/>
    <property type="project" value="InterPro"/>
</dbReference>
<dbReference type="GO" id="GO:0006412">
    <property type="term" value="P:translation"/>
    <property type="evidence" value="ECO:0007669"/>
    <property type="project" value="UniProtKB-UniRule"/>
</dbReference>
<dbReference type="CDD" id="cd00387">
    <property type="entry name" value="Ribosomal_L7_L12"/>
    <property type="match status" value="1"/>
</dbReference>
<dbReference type="FunFam" id="1.20.5.710:FF:000001">
    <property type="entry name" value="50S ribosomal protein L7/L12"/>
    <property type="match status" value="1"/>
</dbReference>
<dbReference type="FunFam" id="3.30.1390.10:FF:000001">
    <property type="entry name" value="50S ribosomal protein L7/L12"/>
    <property type="match status" value="1"/>
</dbReference>
<dbReference type="Gene3D" id="3.30.1390.10">
    <property type="match status" value="1"/>
</dbReference>
<dbReference type="Gene3D" id="1.20.5.710">
    <property type="entry name" value="Single helix bin"/>
    <property type="match status" value="1"/>
</dbReference>
<dbReference type="HAMAP" id="MF_00368">
    <property type="entry name" value="Ribosomal_bL12"/>
    <property type="match status" value="1"/>
</dbReference>
<dbReference type="InterPro" id="IPR000206">
    <property type="entry name" value="Ribosomal_bL12"/>
</dbReference>
<dbReference type="InterPro" id="IPR013823">
    <property type="entry name" value="Ribosomal_bL12_C"/>
</dbReference>
<dbReference type="InterPro" id="IPR014719">
    <property type="entry name" value="Ribosomal_bL12_C/ClpS-like"/>
</dbReference>
<dbReference type="InterPro" id="IPR008932">
    <property type="entry name" value="Ribosomal_bL12_oligo"/>
</dbReference>
<dbReference type="InterPro" id="IPR036235">
    <property type="entry name" value="Ribosomal_bL12_oligo_N_sf"/>
</dbReference>
<dbReference type="NCBIfam" id="TIGR00855">
    <property type="entry name" value="L12"/>
    <property type="match status" value="1"/>
</dbReference>
<dbReference type="PANTHER" id="PTHR45987">
    <property type="entry name" value="39S RIBOSOMAL PROTEIN L12"/>
    <property type="match status" value="1"/>
</dbReference>
<dbReference type="PANTHER" id="PTHR45987:SF4">
    <property type="entry name" value="LARGE RIBOSOMAL SUBUNIT PROTEIN BL12M"/>
    <property type="match status" value="1"/>
</dbReference>
<dbReference type="Pfam" id="PF00542">
    <property type="entry name" value="Ribosomal_L12"/>
    <property type="match status" value="1"/>
</dbReference>
<dbReference type="Pfam" id="PF16320">
    <property type="entry name" value="Ribosomal_L12_N"/>
    <property type="match status" value="1"/>
</dbReference>
<dbReference type="SUPFAM" id="SSF54736">
    <property type="entry name" value="ClpS-like"/>
    <property type="match status" value="1"/>
</dbReference>
<dbReference type="SUPFAM" id="SSF48300">
    <property type="entry name" value="Ribosomal protein L7/12, oligomerisation (N-terminal) domain"/>
    <property type="match status" value="1"/>
</dbReference>
<reference key="1">
    <citation type="journal article" date="2008" name="PLoS ONE">
        <title>Environmental adaptation: genomic analysis of the piezotolerant and psychrotolerant deep-sea iron reducing bacterium Shewanella piezotolerans WP3.</title>
        <authorList>
            <person name="Wang F."/>
            <person name="Wang J."/>
            <person name="Jian H."/>
            <person name="Zhang B."/>
            <person name="Li S."/>
            <person name="Wang F."/>
            <person name="Zeng X."/>
            <person name="Gao L."/>
            <person name="Bartlett D.H."/>
            <person name="Yu J."/>
            <person name="Hu S."/>
            <person name="Xiao X."/>
        </authorList>
    </citation>
    <scope>NUCLEOTIDE SEQUENCE [LARGE SCALE GENOMIC DNA]</scope>
    <source>
        <strain>WP3 / JCM 13877</strain>
    </source>
</reference>
<protein>
    <recommendedName>
        <fullName evidence="1">Large ribosomal subunit protein bL12</fullName>
    </recommendedName>
    <alternativeName>
        <fullName evidence="2">50S ribosomal protein L7/L12</fullName>
    </alternativeName>
</protein>
<keyword id="KW-0687">Ribonucleoprotein</keyword>
<keyword id="KW-0689">Ribosomal protein</keyword>
<evidence type="ECO:0000255" key="1">
    <source>
        <dbReference type="HAMAP-Rule" id="MF_00368"/>
    </source>
</evidence>
<evidence type="ECO:0000305" key="2"/>
<name>RL7_SHEPW</name>
<accession>B8CNC4</accession>
<comment type="function">
    <text evidence="1">Forms part of the ribosomal stalk which helps the ribosome interact with GTP-bound translation factors. Is thus essential for accurate translation.</text>
</comment>
<comment type="subunit">
    <text evidence="1">Homodimer. Part of the ribosomal stalk of the 50S ribosomal subunit. Forms a multimeric L10(L12)X complex, where L10 forms an elongated spine to which 2 to 4 L12 dimers bind in a sequential fashion. Binds GTP-bound translation factors.</text>
</comment>
<comment type="similarity">
    <text evidence="1">Belongs to the bacterial ribosomal protein bL12 family.</text>
</comment>
<gene>
    <name evidence="1" type="primary">rplL</name>
    <name type="ordered locus">swp_2002</name>
</gene>